<evidence type="ECO:0000250" key="1">
    <source>
        <dbReference type="UniProtKB" id="P02621"/>
    </source>
</evidence>
<evidence type="ECO:0000250" key="2">
    <source>
        <dbReference type="UniProtKB" id="P02622"/>
    </source>
</evidence>
<evidence type="ECO:0000250" key="3">
    <source>
        <dbReference type="UniProtKB" id="P02624"/>
    </source>
</evidence>
<evidence type="ECO:0000255" key="4"/>
<evidence type="ECO:0000255" key="5">
    <source>
        <dbReference type="PROSITE-ProRule" id="PRU00448"/>
    </source>
</evidence>
<evidence type="ECO:0000269" key="6">
    <source>
    </source>
</evidence>
<evidence type="ECO:0000303" key="7">
    <source>
    </source>
</evidence>
<evidence type="ECO:0000305" key="8"/>
<reference evidence="8" key="1">
    <citation type="journal article" date="2010" name="J. Proteome Res.">
        <title>Extensive de novo sequencing of new parvalbumin isoforms using a novel combination of bottom-up proteomics, accurate molecular mass measurement by FTICR-MS, and selected MS/MS ion monitoring.</title>
        <authorList>
            <person name="Carrera M."/>
            <person name="Canas B."/>
            <person name="Vazquez J."/>
            <person name="Gallardo J.M."/>
        </authorList>
    </citation>
    <scope>PROTEIN SEQUENCE</scope>
    <scope>MASS SPECTROMETRY</scope>
    <scope>ACETYLATION AT ALA-1</scope>
    <source>
        <tissue evidence="6">Muscle</tissue>
    </source>
</reference>
<dbReference type="SMR" id="P86749"/>
<dbReference type="iPTMnet" id="P86749"/>
<dbReference type="GO" id="GO:0005737">
    <property type="term" value="C:cytoplasm"/>
    <property type="evidence" value="ECO:0007669"/>
    <property type="project" value="TreeGrafter"/>
</dbReference>
<dbReference type="GO" id="GO:0005509">
    <property type="term" value="F:calcium ion binding"/>
    <property type="evidence" value="ECO:0007669"/>
    <property type="project" value="InterPro"/>
</dbReference>
<dbReference type="CDD" id="cd16255">
    <property type="entry name" value="EFh_parvalbumin_beta"/>
    <property type="match status" value="1"/>
</dbReference>
<dbReference type="FunFam" id="1.10.238.10:FF:000060">
    <property type="entry name" value="Parvalbumin, thymic"/>
    <property type="match status" value="1"/>
</dbReference>
<dbReference type="Gene3D" id="1.10.238.10">
    <property type="entry name" value="EF-hand"/>
    <property type="match status" value="1"/>
</dbReference>
<dbReference type="InterPro" id="IPR011992">
    <property type="entry name" value="EF-hand-dom_pair"/>
</dbReference>
<dbReference type="InterPro" id="IPR018247">
    <property type="entry name" value="EF_Hand_1_Ca_BS"/>
</dbReference>
<dbReference type="InterPro" id="IPR002048">
    <property type="entry name" value="EF_hand_dom"/>
</dbReference>
<dbReference type="InterPro" id="IPR008080">
    <property type="entry name" value="Parvalbumin"/>
</dbReference>
<dbReference type="PANTHER" id="PTHR11653:SF12">
    <property type="entry name" value="PARVALBUMIN"/>
    <property type="match status" value="1"/>
</dbReference>
<dbReference type="PANTHER" id="PTHR11653">
    <property type="entry name" value="PARVALBUMIN ALPHA"/>
    <property type="match status" value="1"/>
</dbReference>
<dbReference type="Pfam" id="PF13499">
    <property type="entry name" value="EF-hand_7"/>
    <property type="match status" value="1"/>
</dbReference>
<dbReference type="PRINTS" id="PR01697">
    <property type="entry name" value="PARVALBUMIN"/>
</dbReference>
<dbReference type="SUPFAM" id="SSF47473">
    <property type="entry name" value="EF-hand"/>
    <property type="match status" value="1"/>
</dbReference>
<dbReference type="PROSITE" id="PS00018">
    <property type="entry name" value="EF_HAND_1"/>
    <property type="match status" value="2"/>
</dbReference>
<dbReference type="PROSITE" id="PS50222">
    <property type="entry name" value="EF_HAND_2"/>
    <property type="match status" value="2"/>
</dbReference>
<protein>
    <recommendedName>
        <fullName evidence="7">Parvalbumin beta 1</fullName>
    </recommendedName>
</protein>
<keyword id="KW-0007">Acetylation</keyword>
<keyword id="KW-0020">Allergen</keyword>
<keyword id="KW-0106">Calcium</keyword>
<keyword id="KW-0903">Direct protein sequencing</keyword>
<keyword id="KW-0479">Metal-binding</keyword>
<keyword id="KW-0514">Muscle protein</keyword>
<keyword id="KW-0677">Repeat</keyword>
<accession>P86749</accession>
<feature type="chain" id="PRO_0000399409" description="Parvalbumin beta 1">
    <location>
        <begin position="1"/>
        <end position="108"/>
    </location>
</feature>
<feature type="domain" description="EF-hand 1" evidence="5">
    <location>
        <begin position="38"/>
        <end position="73"/>
    </location>
</feature>
<feature type="domain" description="EF-hand 2" evidence="5">
    <location>
        <begin position="77"/>
        <end position="108"/>
    </location>
</feature>
<feature type="binding site" evidence="1 5">
    <location>
        <position position="51"/>
    </location>
    <ligand>
        <name>Ca(2+)</name>
        <dbReference type="ChEBI" id="CHEBI:29108"/>
        <label>1</label>
    </ligand>
</feature>
<feature type="binding site" evidence="1 5">
    <location>
        <position position="53"/>
    </location>
    <ligand>
        <name>Ca(2+)</name>
        <dbReference type="ChEBI" id="CHEBI:29108"/>
        <label>1</label>
    </ligand>
</feature>
<feature type="binding site" evidence="1 5">
    <location>
        <position position="55"/>
    </location>
    <ligand>
        <name>Ca(2+)</name>
        <dbReference type="ChEBI" id="CHEBI:29108"/>
        <label>1</label>
    </ligand>
</feature>
<feature type="binding site" evidence="1">
    <location>
        <position position="57"/>
    </location>
    <ligand>
        <name>Ca(2+)</name>
        <dbReference type="ChEBI" id="CHEBI:29108"/>
        <label>1</label>
    </ligand>
</feature>
<feature type="binding site" evidence="1">
    <location>
        <position position="59"/>
    </location>
    <ligand>
        <name>Ca(2+)</name>
        <dbReference type="ChEBI" id="CHEBI:29108"/>
        <label>1</label>
    </ligand>
</feature>
<feature type="binding site" evidence="1 5">
    <location>
        <position position="62"/>
    </location>
    <ligand>
        <name>Ca(2+)</name>
        <dbReference type="ChEBI" id="CHEBI:29108"/>
        <label>1</label>
    </ligand>
</feature>
<feature type="binding site" evidence="1 5">
    <location>
        <position position="90"/>
    </location>
    <ligand>
        <name>Ca(2+)</name>
        <dbReference type="ChEBI" id="CHEBI:29108"/>
        <label>2</label>
    </ligand>
</feature>
<feature type="binding site" evidence="1 5">
    <location>
        <position position="92"/>
    </location>
    <ligand>
        <name>Ca(2+)</name>
        <dbReference type="ChEBI" id="CHEBI:29108"/>
        <label>2</label>
    </ligand>
</feature>
<feature type="binding site" evidence="1 5">
    <location>
        <position position="94"/>
    </location>
    <ligand>
        <name>Ca(2+)</name>
        <dbReference type="ChEBI" id="CHEBI:29108"/>
        <label>2</label>
    </ligand>
</feature>
<feature type="binding site" evidence="5">
    <location>
        <position position="96"/>
    </location>
    <ligand>
        <name>Ca(2+)</name>
        <dbReference type="ChEBI" id="CHEBI:29108"/>
        <label>2</label>
    </ligand>
</feature>
<feature type="binding site" evidence="1 5">
    <location>
        <position position="101"/>
    </location>
    <ligand>
        <name>Ca(2+)</name>
        <dbReference type="ChEBI" id="CHEBI:29108"/>
        <label>2</label>
    </ligand>
</feature>
<feature type="modified residue" description="N-acetylalanine" evidence="6">
    <location>
        <position position="1"/>
    </location>
</feature>
<feature type="unsure residue" description="I or L" evidence="6">
    <location>
        <position position="5"/>
    </location>
</feature>
<feature type="unsure residue" description="L or I" evidence="6">
    <location>
        <position position="6"/>
    </location>
</feature>
<feature type="unsure residue" description="I or L" evidence="6">
    <location>
        <position position="11"/>
    </location>
</feature>
<feature type="unsure residue" description="L or I" evidence="6">
    <location>
        <position position="15"/>
    </location>
</feature>
<feature type="unsure residue" description="K or Q" evidence="6">
    <location>
        <position position="19"/>
    </location>
</feature>
<feature type="unsure residue" description="K or Q" evidence="6">
    <location>
        <position position="32"/>
    </location>
</feature>
<feature type="unsure residue" description="I or L" evidence="6">
    <location>
        <position position="33"/>
    </location>
</feature>
<feature type="unsure residue" description="L or I" evidence="6">
    <location>
        <position position="35"/>
    </location>
</feature>
<feature type="unsure residue" description="K or Q" evidence="6">
    <location>
        <position position="36"/>
    </location>
</feature>
<feature type="unsure residue" description="K or Q" evidence="6">
    <location>
        <position position="38"/>
    </location>
</feature>
<feature type="unsure residue" description="I or L" evidence="6">
    <location>
        <position position="43"/>
    </location>
</feature>
<feature type="unsure residue" description="K or Q" evidence="6">
    <location>
        <position position="44"/>
    </location>
</feature>
<feature type="unsure residue" description="K or Q" evidence="6">
    <location>
        <position position="45"/>
    </location>
</feature>
<feature type="unsure residue" description="I or L" evidence="6">
    <location>
        <position position="49"/>
    </location>
</feature>
<feature type="unsure residue" description="I or L" evidence="6">
    <location>
        <position position="50"/>
    </location>
</feature>
<feature type="unsure residue" description="Q or K" evidence="6">
    <location>
        <position position="52"/>
    </location>
</feature>
<feature type="unsure residue" description="K or Q" evidence="6">
    <location>
        <position position="54"/>
    </location>
</feature>
<feature type="unsure residue" description="L or I" evidence="6">
    <location>
        <position position="63"/>
    </location>
</feature>
<feature type="unsure residue" description="K or Q" evidence="6">
    <location>
        <position position="64"/>
    </location>
</feature>
<feature type="unsure residue" description="L or I" evidence="6">
    <location>
        <position position="65"/>
    </location>
</feature>
<feature type="unsure residue" description="L or I" evidence="6">
    <location>
        <position position="67"/>
    </location>
</feature>
<feature type="unsure residue" description="Q or K" evidence="6">
    <location>
        <position position="68"/>
    </location>
</feature>
<feature type="unsure residue" description="L or I" evidence="6">
    <location>
        <position position="77"/>
    </location>
</feature>
<feature type="unsure residue" description="L or I" evidence="6">
    <location>
        <position position="86"/>
    </location>
</feature>
<feature type="unsure residue" description="K or Q" evidence="6">
    <location>
        <position position="87"/>
    </location>
</feature>
<feature type="unsure residue" description="K or Q" evidence="6">
    <location>
        <position position="96"/>
    </location>
</feature>
<feature type="unsure residue" description="I or L" evidence="6">
    <location>
        <position position="97"/>
    </location>
</feature>
<feature type="unsure residue" description="K or Q" evidence="6">
    <location>
        <position position="107"/>
    </location>
</feature>
<comment type="function">
    <text evidence="2 3">In muscle, parvalbumin is thought to be involved in relaxation after contraction. It binds two calcium ions (By similarity).</text>
</comment>
<comment type="mass spectrometry" mass="11302.715" error="0.015" method="Electrospray" evidence="6"/>
<comment type="miscellaneous">
    <text evidence="2 6">Is regarded as an important allergen.</text>
</comment>
<comment type="miscellaneous">
    <text evidence="6">On the 2D-gel the determined pI of this protein is: 4.30, its MW is: 11.30 kDa.</text>
</comment>
<comment type="similarity">
    <text evidence="4">Belongs to the parvalbumin family.</text>
</comment>
<sequence length="108" mass="11268">AFAGILADADITAALAACKAEGTFTHGEFFTKIGLKGKSAADIKKVFGIIDQDKSDFVEEDELKLFLQNFSAGARALTDAETATFLKAGDSDGDGKIGVDEFAAMVKG</sequence>
<organism>
    <name type="scientific">Merluccius polylepis</name>
    <name type="common">Southern hake</name>
    <name type="synonym">Merluccius australis polylepis</name>
    <dbReference type="NCBI Taxonomy" id="2705414"/>
    <lineage>
        <taxon>Eukaryota</taxon>
        <taxon>Metazoa</taxon>
        <taxon>Chordata</taxon>
        <taxon>Craniata</taxon>
        <taxon>Vertebrata</taxon>
        <taxon>Euteleostomi</taxon>
        <taxon>Actinopterygii</taxon>
        <taxon>Neopterygii</taxon>
        <taxon>Teleostei</taxon>
        <taxon>Neoteleostei</taxon>
        <taxon>Acanthomorphata</taxon>
        <taxon>Zeiogadaria</taxon>
        <taxon>Gadariae</taxon>
        <taxon>Gadiformes</taxon>
        <taxon>Gadoidei</taxon>
        <taxon>Merlucciidae</taxon>
        <taxon>Merluccius</taxon>
    </lineage>
</organism>
<proteinExistence type="evidence at protein level"/>
<name>PRVB1_MERPL</name>